<feature type="chain" id="PRO_0000120888" description="Uracil phosphoribosyltransferase">
    <location>
        <begin position="1"/>
        <end position="209"/>
    </location>
</feature>
<feature type="binding site" evidence="1">
    <location>
        <position position="79"/>
    </location>
    <ligand>
        <name>5-phospho-alpha-D-ribose 1-diphosphate</name>
        <dbReference type="ChEBI" id="CHEBI:58017"/>
    </ligand>
</feature>
<feature type="binding site" evidence="1">
    <location>
        <position position="104"/>
    </location>
    <ligand>
        <name>5-phospho-alpha-D-ribose 1-diphosphate</name>
        <dbReference type="ChEBI" id="CHEBI:58017"/>
    </ligand>
</feature>
<feature type="binding site" evidence="1">
    <location>
        <begin position="131"/>
        <end position="139"/>
    </location>
    <ligand>
        <name>5-phospho-alpha-D-ribose 1-diphosphate</name>
        <dbReference type="ChEBI" id="CHEBI:58017"/>
    </ligand>
</feature>
<feature type="binding site" evidence="1">
    <location>
        <position position="194"/>
    </location>
    <ligand>
        <name>uracil</name>
        <dbReference type="ChEBI" id="CHEBI:17568"/>
    </ligand>
</feature>
<feature type="binding site" evidence="1">
    <location>
        <begin position="199"/>
        <end position="201"/>
    </location>
    <ligand>
        <name>uracil</name>
        <dbReference type="ChEBI" id="CHEBI:17568"/>
    </ligand>
</feature>
<feature type="binding site" evidence="1">
    <location>
        <position position="200"/>
    </location>
    <ligand>
        <name>5-phospho-alpha-D-ribose 1-diphosphate</name>
        <dbReference type="ChEBI" id="CHEBI:58017"/>
    </ligand>
</feature>
<comment type="function">
    <text evidence="1">Catalyzes the conversion of uracil and 5-phospho-alpha-D-ribose 1-diphosphate (PRPP) to UMP and diphosphate.</text>
</comment>
<comment type="catalytic activity">
    <reaction evidence="1">
        <text>UMP + diphosphate = 5-phospho-alpha-D-ribose 1-diphosphate + uracil</text>
        <dbReference type="Rhea" id="RHEA:13017"/>
        <dbReference type="ChEBI" id="CHEBI:17568"/>
        <dbReference type="ChEBI" id="CHEBI:33019"/>
        <dbReference type="ChEBI" id="CHEBI:57865"/>
        <dbReference type="ChEBI" id="CHEBI:58017"/>
        <dbReference type="EC" id="2.4.2.9"/>
    </reaction>
</comment>
<comment type="cofactor">
    <cofactor evidence="1">
        <name>Mg(2+)</name>
        <dbReference type="ChEBI" id="CHEBI:18420"/>
    </cofactor>
    <text evidence="1">Binds 1 Mg(2+) ion per subunit. The magnesium is bound as Mg-PRPP.</text>
</comment>
<comment type="activity regulation">
    <text evidence="1">Allosterically activated by GTP.</text>
</comment>
<comment type="pathway">
    <text evidence="1">Pyrimidine metabolism; UMP biosynthesis via salvage pathway; UMP from uracil: step 1/1.</text>
</comment>
<comment type="similarity">
    <text evidence="1">Belongs to the UPRTase family.</text>
</comment>
<gene>
    <name evidence="1" type="primary">upp</name>
    <name type="ordered locus">SSP0772</name>
</gene>
<accession>Q49Z59</accession>
<sequence>MGKVHVFDHPLIQHKLSYIRDVHTGTKEFRELVDEVGMLMAYEVTRDLELQDVEIETPVTKMIAKRLTGKKLAFVPILRAGLGMTQGILTLVPAARIGHVGLYRDPETLEAVEYFVKLPQDIEEREIVVVDPMLATGASAIEAINSLKKRGAKNIRFMCLIAAPEGVEKLQAAHEDVDIFIAALDEKLDNHAYITPGLGDAGDRLFGTK</sequence>
<name>UPP_STAS1</name>
<proteinExistence type="inferred from homology"/>
<reference key="1">
    <citation type="journal article" date="2005" name="Proc. Natl. Acad. Sci. U.S.A.">
        <title>Whole genome sequence of Staphylococcus saprophyticus reveals the pathogenesis of uncomplicated urinary tract infection.</title>
        <authorList>
            <person name="Kuroda M."/>
            <person name="Yamashita A."/>
            <person name="Hirakawa H."/>
            <person name="Kumano M."/>
            <person name="Morikawa K."/>
            <person name="Higashide M."/>
            <person name="Maruyama A."/>
            <person name="Inose Y."/>
            <person name="Matoba K."/>
            <person name="Toh H."/>
            <person name="Kuhara S."/>
            <person name="Hattori M."/>
            <person name="Ohta T."/>
        </authorList>
    </citation>
    <scope>NUCLEOTIDE SEQUENCE [LARGE SCALE GENOMIC DNA]</scope>
    <source>
        <strain>ATCC 15305 / DSM 20229 / NCIMB 8711 / NCTC 7292 / S-41</strain>
    </source>
</reference>
<protein>
    <recommendedName>
        <fullName evidence="1">Uracil phosphoribosyltransferase</fullName>
        <ecNumber evidence="1">2.4.2.9</ecNumber>
    </recommendedName>
    <alternativeName>
        <fullName evidence="1">UMP pyrophosphorylase</fullName>
    </alternativeName>
    <alternativeName>
        <fullName evidence="1">UPRTase</fullName>
    </alternativeName>
</protein>
<organism>
    <name type="scientific">Staphylococcus saprophyticus subsp. saprophyticus (strain ATCC 15305 / DSM 20229 / NCIMB 8711 / NCTC 7292 / S-41)</name>
    <dbReference type="NCBI Taxonomy" id="342451"/>
    <lineage>
        <taxon>Bacteria</taxon>
        <taxon>Bacillati</taxon>
        <taxon>Bacillota</taxon>
        <taxon>Bacilli</taxon>
        <taxon>Bacillales</taxon>
        <taxon>Staphylococcaceae</taxon>
        <taxon>Staphylococcus</taxon>
    </lineage>
</organism>
<dbReference type="EC" id="2.4.2.9" evidence="1"/>
<dbReference type="EMBL" id="AP008934">
    <property type="protein sequence ID" value="BAE17917.1"/>
    <property type="molecule type" value="Genomic_DNA"/>
</dbReference>
<dbReference type="RefSeq" id="WP_011302675.1">
    <property type="nucleotide sequence ID" value="NC_007350.1"/>
</dbReference>
<dbReference type="SMR" id="Q49Z59"/>
<dbReference type="GeneID" id="3615837"/>
<dbReference type="KEGG" id="ssp:SSP0772"/>
<dbReference type="PATRIC" id="fig|342451.11.peg.774"/>
<dbReference type="eggNOG" id="COG0035">
    <property type="taxonomic scope" value="Bacteria"/>
</dbReference>
<dbReference type="HOGENOM" id="CLU_067096_2_2_9"/>
<dbReference type="OrthoDB" id="9781675at2"/>
<dbReference type="UniPathway" id="UPA00574">
    <property type="reaction ID" value="UER00636"/>
</dbReference>
<dbReference type="Proteomes" id="UP000006371">
    <property type="component" value="Chromosome"/>
</dbReference>
<dbReference type="GO" id="GO:0005525">
    <property type="term" value="F:GTP binding"/>
    <property type="evidence" value="ECO:0007669"/>
    <property type="project" value="UniProtKB-KW"/>
</dbReference>
<dbReference type="GO" id="GO:0000287">
    <property type="term" value="F:magnesium ion binding"/>
    <property type="evidence" value="ECO:0007669"/>
    <property type="project" value="UniProtKB-UniRule"/>
</dbReference>
<dbReference type="GO" id="GO:0004845">
    <property type="term" value="F:uracil phosphoribosyltransferase activity"/>
    <property type="evidence" value="ECO:0007669"/>
    <property type="project" value="UniProtKB-UniRule"/>
</dbReference>
<dbReference type="GO" id="GO:0044206">
    <property type="term" value="P:UMP salvage"/>
    <property type="evidence" value="ECO:0007669"/>
    <property type="project" value="UniProtKB-UniRule"/>
</dbReference>
<dbReference type="GO" id="GO:0006223">
    <property type="term" value="P:uracil salvage"/>
    <property type="evidence" value="ECO:0007669"/>
    <property type="project" value="InterPro"/>
</dbReference>
<dbReference type="CDD" id="cd06223">
    <property type="entry name" value="PRTases_typeI"/>
    <property type="match status" value="1"/>
</dbReference>
<dbReference type="FunFam" id="3.40.50.2020:FF:000003">
    <property type="entry name" value="Uracil phosphoribosyltransferase"/>
    <property type="match status" value="1"/>
</dbReference>
<dbReference type="Gene3D" id="3.40.50.2020">
    <property type="match status" value="1"/>
</dbReference>
<dbReference type="HAMAP" id="MF_01218_B">
    <property type="entry name" value="Upp_B"/>
    <property type="match status" value="1"/>
</dbReference>
<dbReference type="InterPro" id="IPR000836">
    <property type="entry name" value="PRibTrfase_dom"/>
</dbReference>
<dbReference type="InterPro" id="IPR029057">
    <property type="entry name" value="PRTase-like"/>
</dbReference>
<dbReference type="InterPro" id="IPR034332">
    <property type="entry name" value="Upp_B"/>
</dbReference>
<dbReference type="InterPro" id="IPR050054">
    <property type="entry name" value="UPRTase/APRTase"/>
</dbReference>
<dbReference type="InterPro" id="IPR005765">
    <property type="entry name" value="Ura_phspho_trans"/>
</dbReference>
<dbReference type="NCBIfam" id="NF001097">
    <property type="entry name" value="PRK00129.1"/>
    <property type="match status" value="1"/>
</dbReference>
<dbReference type="NCBIfam" id="TIGR01091">
    <property type="entry name" value="upp"/>
    <property type="match status" value="1"/>
</dbReference>
<dbReference type="PANTHER" id="PTHR32315">
    <property type="entry name" value="ADENINE PHOSPHORIBOSYLTRANSFERASE"/>
    <property type="match status" value="1"/>
</dbReference>
<dbReference type="PANTHER" id="PTHR32315:SF4">
    <property type="entry name" value="URACIL PHOSPHORIBOSYLTRANSFERASE, CHLOROPLASTIC"/>
    <property type="match status" value="1"/>
</dbReference>
<dbReference type="Pfam" id="PF14681">
    <property type="entry name" value="UPRTase"/>
    <property type="match status" value="1"/>
</dbReference>
<dbReference type="SUPFAM" id="SSF53271">
    <property type="entry name" value="PRTase-like"/>
    <property type="match status" value="1"/>
</dbReference>
<keyword id="KW-0021">Allosteric enzyme</keyword>
<keyword id="KW-0328">Glycosyltransferase</keyword>
<keyword id="KW-0342">GTP-binding</keyword>
<keyword id="KW-0460">Magnesium</keyword>
<keyword id="KW-0547">Nucleotide-binding</keyword>
<keyword id="KW-1185">Reference proteome</keyword>
<keyword id="KW-0808">Transferase</keyword>
<evidence type="ECO:0000255" key="1">
    <source>
        <dbReference type="HAMAP-Rule" id="MF_01218"/>
    </source>
</evidence>